<protein>
    <recommendedName>
        <fullName evidence="1">Serine hydroxymethyltransferase</fullName>
        <shortName evidence="1">SHMT</shortName>
        <shortName evidence="1">Serine methylase</shortName>
        <ecNumber evidence="1">2.1.2.1</ecNumber>
    </recommendedName>
</protein>
<proteinExistence type="inferred from homology"/>
<accession>A4ITJ9</accession>
<organism>
    <name type="scientific">Geobacillus thermodenitrificans (strain NG80-2)</name>
    <dbReference type="NCBI Taxonomy" id="420246"/>
    <lineage>
        <taxon>Bacteria</taxon>
        <taxon>Bacillati</taxon>
        <taxon>Bacillota</taxon>
        <taxon>Bacilli</taxon>
        <taxon>Bacillales</taxon>
        <taxon>Anoxybacillaceae</taxon>
        <taxon>Geobacillus</taxon>
    </lineage>
</organism>
<comment type="function">
    <text evidence="1">Catalyzes the reversible interconversion of serine and glycine with tetrahydrofolate (THF) serving as the one-carbon carrier. This reaction serves as the major source of one-carbon groups required for the biosynthesis of purines, thymidylate, methionine, and other important biomolecules. Also exhibits THF-independent aldolase activity toward beta-hydroxyamino acids, producing glycine and aldehydes, via a retro-aldol mechanism.</text>
</comment>
<comment type="catalytic activity">
    <reaction evidence="1">
        <text>(6R)-5,10-methylene-5,6,7,8-tetrahydrofolate + glycine + H2O = (6S)-5,6,7,8-tetrahydrofolate + L-serine</text>
        <dbReference type="Rhea" id="RHEA:15481"/>
        <dbReference type="ChEBI" id="CHEBI:15377"/>
        <dbReference type="ChEBI" id="CHEBI:15636"/>
        <dbReference type="ChEBI" id="CHEBI:33384"/>
        <dbReference type="ChEBI" id="CHEBI:57305"/>
        <dbReference type="ChEBI" id="CHEBI:57453"/>
        <dbReference type="EC" id="2.1.2.1"/>
    </reaction>
</comment>
<comment type="cofactor">
    <cofactor evidence="1">
        <name>pyridoxal 5'-phosphate</name>
        <dbReference type="ChEBI" id="CHEBI:597326"/>
    </cofactor>
</comment>
<comment type="pathway">
    <text evidence="1">One-carbon metabolism; tetrahydrofolate interconversion.</text>
</comment>
<comment type="pathway">
    <text evidence="1">Amino-acid biosynthesis; glycine biosynthesis; glycine from L-serine: step 1/1.</text>
</comment>
<comment type="subunit">
    <text evidence="1">Homodimer.</text>
</comment>
<comment type="subcellular location">
    <subcellularLocation>
        <location evidence="1">Cytoplasm</location>
    </subcellularLocation>
</comment>
<comment type="similarity">
    <text evidence="1">Belongs to the SHMT family.</text>
</comment>
<sequence length="412" mass="45300">MNYLPQQDPQVFATIEQERKRQHAKIELIASENFVSRAVMEAQGSVMTNKYAEGYPGRRYYGGCEYVDVVEDLARERAKQLFGAEHANVQPHSGAQANMAVYFTVLKPGDTVLGMNLSHGGHLTHGSPVNFSGVQYNFVEYGVDPETHVIDYDDVREKARLHRPKLIVAGASAYPRVIDFAKFREIADEVGAYLMVDMAHIAGLVAAGLHPNPVPYAHFVTTTTHKTLRGPRGGMILCQEQFAKQIDKSIFPGIQGGPLMHVIAAKAVALGEALQDDFKVYAKRIIDNAQRLAAALQKEGFTLVSGGTDNHLLLVDLRPQQLTGKTAEKVLDEVGITVNKNTIPYDPESPFVTSGIRIGTAAVTTRGFGLEEMDEIASLIGLVLKNIDNEQALEEARQRVVALTEKFPLYQD</sequence>
<gene>
    <name evidence="1" type="primary">glyA</name>
    <name type="ordered locus">GTNG_3314</name>
</gene>
<reference key="1">
    <citation type="journal article" date="2007" name="Proc. Natl. Acad. Sci. U.S.A.">
        <title>Genome and proteome of long-chain alkane degrading Geobacillus thermodenitrificans NG80-2 isolated from a deep-subsurface oil reservoir.</title>
        <authorList>
            <person name="Feng L."/>
            <person name="Wang W."/>
            <person name="Cheng J."/>
            <person name="Ren Y."/>
            <person name="Zhao G."/>
            <person name="Gao C."/>
            <person name="Tang Y."/>
            <person name="Liu X."/>
            <person name="Han W."/>
            <person name="Peng X."/>
            <person name="Liu R."/>
            <person name="Wang L."/>
        </authorList>
    </citation>
    <scope>NUCLEOTIDE SEQUENCE [LARGE SCALE GENOMIC DNA]</scope>
    <source>
        <strain>NG80-2</strain>
    </source>
</reference>
<name>GLYA_GEOTN</name>
<keyword id="KW-0028">Amino-acid biosynthesis</keyword>
<keyword id="KW-0963">Cytoplasm</keyword>
<keyword id="KW-0554">One-carbon metabolism</keyword>
<keyword id="KW-0663">Pyridoxal phosphate</keyword>
<keyword id="KW-0808">Transferase</keyword>
<dbReference type="EC" id="2.1.2.1" evidence="1"/>
<dbReference type="EMBL" id="CP000557">
    <property type="protein sequence ID" value="ABO68653.1"/>
    <property type="molecule type" value="Genomic_DNA"/>
</dbReference>
<dbReference type="RefSeq" id="WP_011888402.1">
    <property type="nucleotide sequence ID" value="NC_009328.1"/>
</dbReference>
<dbReference type="SMR" id="A4ITJ9"/>
<dbReference type="KEGG" id="gtn:GTNG_3314"/>
<dbReference type="eggNOG" id="COG0112">
    <property type="taxonomic scope" value="Bacteria"/>
</dbReference>
<dbReference type="HOGENOM" id="CLU_022477_2_1_9"/>
<dbReference type="UniPathway" id="UPA00193"/>
<dbReference type="UniPathway" id="UPA00288">
    <property type="reaction ID" value="UER01023"/>
</dbReference>
<dbReference type="Proteomes" id="UP000001578">
    <property type="component" value="Chromosome"/>
</dbReference>
<dbReference type="GO" id="GO:0005829">
    <property type="term" value="C:cytosol"/>
    <property type="evidence" value="ECO:0007669"/>
    <property type="project" value="TreeGrafter"/>
</dbReference>
<dbReference type="GO" id="GO:0004372">
    <property type="term" value="F:glycine hydroxymethyltransferase activity"/>
    <property type="evidence" value="ECO:0007669"/>
    <property type="project" value="UniProtKB-UniRule"/>
</dbReference>
<dbReference type="GO" id="GO:0030170">
    <property type="term" value="F:pyridoxal phosphate binding"/>
    <property type="evidence" value="ECO:0007669"/>
    <property type="project" value="UniProtKB-UniRule"/>
</dbReference>
<dbReference type="GO" id="GO:0019264">
    <property type="term" value="P:glycine biosynthetic process from serine"/>
    <property type="evidence" value="ECO:0007669"/>
    <property type="project" value="UniProtKB-UniRule"/>
</dbReference>
<dbReference type="GO" id="GO:0035999">
    <property type="term" value="P:tetrahydrofolate interconversion"/>
    <property type="evidence" value="ECO:0007669"/>
    <property type="project" value="UniProtKB-UniRule"/>
</dbReference>
<dbReference type="CDD" id="cd00378">
    <property type="entry name" value="SHMT"/>
    <property type="match status" value="1"/>
</dbReference>
<dbReference type="FunFam" id="3.40.640.10:FF:000001">
    <property type="entry name" value="Serine hydroxymethyltransferase"/>
    <property type="match status" value="1"/>
</dbReference>
<dbReference type="FunFam" id="3.90.1150.10:FF:000003">
    <property type="entry name" value="Serine hydroxymethyltransferase"/>
    <property type="match status" value="1"/>
</dbReference>
<dbReference type="Gene3D" id="3.90.1150.10">
    <property type="entry name" value="Aspartate Aminotransferase, domain 1"/>
    <property type="match status" value="1"/>
</dbReference>
<dbReference type="Gene3D" id="3.40.640.10">
    <property type="entry name" value="Type I PLP-dependent aspartate aminotransferase-like (Major domain)"/>
    <property type="match status" value="1"/>
</dbReference>
<dbReference type="HAMAP" id="MF_00051">
    <property type="entry name" value="SHMT"/>
    <property type="match status" value="1"/>
</dbReference>
<dbReference type="InterPro" id="IPR015424">
    <property type="entry name" value="PyrdxlP-dep_Trfase"/>
</dbReference>
<dbReference type="InterPro" id="IPR015421">
    <property type="entry name" value="PyrdxlP-dep_Trfase_major"/>
</dbReference>
<dbReference type="InterPro" id="IPR015422">
    <property type="entry name" value="PyrdxlP-dep_Trfase_small"/>
</dbReference>
<dbReference type="InterPro" id="IPR001085">
    <property type="entry name" value="Ser_HO-MeTrfase"/>
</dbReference>
<dbReference type="InterPro" id="IPR049943">
    <property type="entry name" value="Ser_HO-MeTrfase-like"/>
</dbReference>
<dbReference type="InterPro" id="IPR019798">
    <property type="entry name" value="Ser_HO-MeTrfase_PLP_BS"/>
</dbReference>
<dbReference type="InterPro" id="IPR039429">
    <property type="entry name" value="SHMT-like_dom"/>
</dbReference>
<dbReference type="NCBIfam" id="NF000586">
    <property type="entry name" value="PRK00011.1"/>
    <property type="match status" value="1"/>
</dbReference>
<dbReference type="PANTHER" id="PTHR11680">
    <property type="entry name" value="SERINE HYDROXYMETHYLTRANSFERASE"/>
    <property type="match status" value="1"/>
</dbReference>
<dbReference type="PANTHER" id="PTHR11680:SF35">
    <property type="entry name" value="SERINE HYDROXYMETHYLTRANSFERASE 1"/>
    <property type="match status" value="1"/>
</dbReference>
<dbReference type="Pfam" id="PF00464">
    <property type="entry name" value="SHMT"/>
    <property type="match status" value="1"/>
</dbReference>
<dbReference type="PIRSF" id="PIRSF000412">
    <property type="entry name" value="SHMT"/>
    <property type="match status" value="1"/>
</dbReference>
<dbReference type="SUPFAM" id="SSF53383">
    <property type="entry name" value="PLP-dependent transferases"/>
    <property type="match status" value="1"/>
</dbReference>
<dbReference type="PROSITE" id="PS00096">
    <property type="entry name" value="SHMT"/>
    <property type="match status" value="1"/>
</dbReference>
<feature type="chain" id="PRO_1000006256" description="Serine hydroxymethyltransferase">
    <location>
        <begin position="1"/>
        <end position="412"/>
    </location>
</feature>
<feature type="binding site" evidence="1">
    <location>
        <position position="117"/>
    </location>
    <ligand>
        <name>(6S)-5,6,7,8-tetrahydrofolate</name>
        <dbReference type="ChEBI" id="CHEBI:57453"/>
    </ligand>
</feature>
<feature type="binding site" evidence="1">
    <location>
        <begin position="121"/>
        <end position="123"/>
    </location>
    <ligand>
        <name>(6S)-5,6,7,8-tetrahydrofolate</name>
        <dbReference type="ChEBI" id="CHEBI:57453"/>
    </ligand>
</feature>
<feature type="binding site" evidence="1">
    <location>
        <begin position="349"/>
        <end position="351"/>
    </location>
    <ligand>
        <name>(6S)-5,6,7,8-tetrahydrofolate</name>
        <dbReference type="ChEBI" id="CHEBI:57453"/>
    </ligand>
</feature>
<feature type="site" description="Plays an important role in substrate specificity" evidence="1">
    <location>
        <position position="225"/>
    </location>
</feature>
<feature type="modified residue" description="N6-(pyridoxal phosphate)lysine" evidence="1">
    <location>
        <position position="226"/>
    </location>
</feature>
<evidence type="ECO:0000255" key="1">
    <source>
        <dbReference type="HAMAP-Rule" id="MF_00051"/>
    </source>
</evidence>